<comment type="function">
    <text evidence="1">This protein binds to the 23S rRNA, and is important in its secondary structure. It is located near the subunit interface in the base of the L7/L12 stalk, and near the tRNA binding site of the peptidyltransferase center.</text>
</comment>
<comment type="subunit">
    <text evidence="1">Part of the 50S ribosomal subunit.</text>
</comment>
<comment type="similarity">
    <text evidence="1">Belongs to the universal ribosomal protein uL6 family.</text>
</comment>
<keyword id="KW-1185">Reference proteome</keyword>
<keyword id="KW-0687">Ribonucleoprotein</keyword>
<keyword id="KW-0689">Ribosomal protein</keyword>
<keyword id="KW-0694">RNA-binding</keyword>
<keyword id="KW-0699">rRNA-binding</keyword>
<dbReference type="EMBL" id="AE008691">
    <property type="protein sequence ID" value="AAM25420.1"/>
    <property type="molecule type" value="Genomic_DNA"/>
</dbReference>
<dbReference type="RefSeq" id="WP_011026323.1">
    <property type="nucleotide sequence ID" value="NZ_JANUCV010000001.1"/>
</dbReference>
<dbReference type="SMR" id="Q8R7W9"/>
<dbReference type="STRING" id="273068.TTE2276"/>
<dbReference type="KEGG" id="tte:TTE2276"/>
<dbReference type="eggNOG" id="COG0097">
    <property type="taxonomic scope" value="Bacteria"/>
</dbReference>
<dbReference type="HOGENOM" id="CLU_065464_1_2_9"/>
<dbReference type="OrthoDB" id="9805007at2"/>
<dbReference type="Proteomes" id="UP000000555">
    <property type="component" value="Chromosome"/>
</dbReference>
<dbReference type="GO" id="GO:0022625">
    <property type="term" value="C:cytosolic large ribosomal subunit"/>
    <property type="evidence" value="ECO:0007669"/>
    <property type="project" value="TreeGrafter"/>
</dbReference>
<dbReference type="GO" id="GO:0019843">
    <property type="term" value="F:rRNA binding"/>
    <property type="evidence" value="ECO:0007669"/>
    <property type="project" value="UniProtKB-UniRule"/>
</dbReference>
<dbReference type="GO" id="GO:0003735">
    <property type="term" value="F:structural constituent of ribosome"/>
    <property type="evidence" value="ECO:0007669"/>
    <property type="project" value="InterPro"/>
</dbReference>
<dbReference type="GO" id="GO:0002181">
    <property type="term" value="P:cytoplasmic translation"/>
    <property type="evidence" value="ECO:0007669"/>
    <property type="project" value="TreeGrafter"/>
</dbReference>
<dbReference type="FunFam" id="3.90.930.12:FF:000001">
    <property type="entry name" value="50S ribosomal protein L6"/>
    <property type="match status" value="1"/>
</dbReference>
<dbReference type="FunFam" id="3.90.930.12:FF:000002">
    <property type="entry name" value="50S ribosomal protein L6"/>
    <property type="match status" value="1"/>
</dbReference>
<dbReference type="Gene3D" id="3.90.930.12">
    <property type="entry name" value="Ribosomal protein L6, alpha-beta domain"/>
    <property type="match status" value="2"/>
</dbReference>
<dbReference type="HAMAP" id="MF_01365_B">
    <property type="entry name" value="Ribosomal_uL6_B"/>
    <property type="match status" value="1"/>
</dbReference>
<dbReference type="InterPro" id="IPR000702">
    <property type="entry name" value="Ribosomal_uL6-like"/>
</dbReference>
<dbReference type="InterPro" id="IPR036789">
    <property type="entry name" value="Ribosomal_uL6-like_a/b-dom_sf"/>
</dbReference>
<dbReference type="InterPro" id="IPR020040">
    <property type="entry name" value="Ribosomal_uL6_a/b-dom"/>
</dbReference>
<dbReference type="InterPro" id="IPR019906">
    <property type="entry name" value="Ribosomal_uL6_bac-type"/>
</dbReference>
<dbReference type="NCBIfam" id="TIGR03654">
    <property type="entry name" value="L6_bact"/>
    <property type="match status" value="1"/>
</dbReference>
<dbReference type="PANTHER" id="PTHR11655">
    <property type="entry name" value="60S/50S RIBOSOMAL PROTEIN L6/L9"/>
    <property type="match status" value="1"/>
</dbReference>
<dbReference type="PANTHER" id="PTHR11655:SF14">
    <property type="entry name" value="LARGE RIBOSOMAL SUBUNIT PROTEIN UL6M"/>
    <property type="match status" value="1"/>
</dbReference>
<dbReference type="Pfam" id="PF00347">
    <property type="entry name" value="Ribosomal_L6"/>
    <property type="match status" value="2"/>
</dbReference>
<dbReference type="PIRSF" id="PIRSF002162">
    <property type="entry name" value="Ribosomal_L6"/>
    <property type="match status" value="1"/>
</dbReference>
<dbReference type="PRINTS" id="PR00059">
    <property type="entry name" value="RIBOSOMALL6"/>
</dbReference>
<dbReference type="SUPFAM" id="SSF56053">
    <property type="entry name" value="Ribosomal protein L6"/>
    <property type="match status" value="2"/>
</dbReference>
<reference key="1">
    <citation type="journal article" date="2002" name="Genome Res.">
        <title>A complete sequence of the T. tengcongensis genome.</title>
        <authorList>
            <person name="Bao Q."/>
            <person name="Tian Y."/>
            <person name="Li W."/>
            <person name="Xu Z."/>
            <person name="Xuan Z."/>
            <person name="Hu S."/>
            <person name="Dong W."/>
            <person name="Yang J."/>
            <person name="Chen Y."/>
            <person name="Xue Y."/>
            <person name="Xu Y."/>
            <person name="Lai X."/>
            <person name="Huang L."/>
            <person name="Dong X."/>
            <person name="Ma Y."/>
            <person name="Ling L."/>
            <person name="Tan H."/>
            <person name="Chen R."/>
            <person name="Wang J."/>
            <person name="Yu J."/>
            <person name="Yang H."/>
        </authorList>
    </citation>
    <scope>NUCLEOTIDE SEQUENCE [LARGE SCALE GENOMIC DNA]</scope>
    <source>
        <strain>DSM 15242 / JCM 11007 / NBRC 100824 / MB4</strain>
    </source>
</reference>
<name>RL6_CALS4</name>
<sequence length="180" mass="19699">MSRIGRLPIPIPKGVEVKVSPDNVVTVKGAKGTLEKKFPPIVNIEVRDGEVVVTRKGDDKEERAMHGTTRAIIANMVKGVTEGFEKALEIVGVGYRAAKQGKKLILNVGYSHPVEIEEEPGIEIIVEGNNRIIVRGADKERVGQVAANIRRVREPDAYQGKGIRYVGEVVRLKEGKTGKK</sequence>
<organism>
    <name type="scientific">Caldanaerobacter subterraneus subsp. tengcongensis (strain DSM 15242 / JCM 11007 / NBRC 100824 / MB4)</name>
    <name type="common">Thermoanaerobacter tengcongensis</name>
    <dbReference type="NCBI Taxonomy" id="273068"/>
    <lineage>
        <taxon>Bacteria</taxon>
        <taxon>Bacillati</taxon>
        <taxon>Bacillota</taxon>
        <taxon>Clostridia</taxon>
        <taxon>Thermoanaerobacterales</taxon>
        <taxon>Thermoanaerobacteraceae</taxon>
        <taxon>Caldanaerobacter</taxon>
    </lineage>
</organism>
<accession>Q8R7W9</accession>
<proteinExistence type="inferred from homology"/>
<protein>
    <recommendedName>
        <fullName evidence="1">Large ribosomal subunit protein uL6</fullName>
    </recommendedName>
    <alternativeName>
        <fullName evidence="2">50S ribosomal protein L6</fullName>
    </alternativeName>
</protein>
<evidence type="ECO:0000255" key="1">
    <source>
        <dbReference type="HAMAP-Rule" id="MF_01365"/>
    </source>
</evidence>
<evidence type="ECO:0000305" key="2"/>
<gene>
    <name evidence="1" type="primary">rplF</name>
    <name type="ordered locus">TTE2276</name>
</gene>
<feature type="chain" id="PRO_0000260967" description="Large ribosomal subunit protein uL6">
    <location>
        <begin position="1"/>
        <end position="180"/>
    </location>
</feature>